<evidence type="ECO:0000250" key="1"/>
<evidence type="ECO:0000250" key="2">
    <source>
        <dbReference type="UniProtKB" id="P45452"/>
    </source>
</evidence>
<evidence type="ECO:0000255" key="3"/>
<evidence type="ECO:0000255" key="4">
    <source>
        <dbReference type="PROSITE-ProRule" id="PRU10095"/>
    </source>
</evidence>
<evidence type="ECO:0000256" key="5">
    <source>
        <dbReference type="SAM" id="MobiDB-lite"/>
    </source>
</evidence>
<evidence type="ECO:0000305" key="6"/>
<comment type="function">
    <text evidence="1">Plays a role in the degradation of extracellular matrix proteins including fibrillar collagen, fibronectin, TNC and ACAN. Cleaves triple helical collagens, including type I, type II and type III collagen, but has the highest activity with soluble type II collagen. Can also degrade collagen type IV, type XIV and type X. May also function by activating or degrading key regulatory proteins, such as TGFB1 and CCN2. Plays a role in wound healing, tissue remodeling, cartilage degradation, bone development, bone mineralization and ossification. Required for normal embryonic bone development and ossification. Plays a role in the healing of bone fractures via endochondral ossification. Plays a role in wound healing, probably by a mechanism that involves proteolytic activation of TGFB1 and degradation of CCN2. Plays a role in keratinocyte migration during wound healing. May play a role in cell migration and in tumor cell invasion (By similarity).</text>
</comment>
<comment type="cofactor">
    <cofactor evidence="1">
        <name>Ca(2+)</name>
        <dbReference type="ChEBI" id="CHEBI:29108"/>
    </cofactor>
    <text evidence="1">Can bind about 5 Ca(2+) ions per subunit.</text>
</comment>
<comment type="cofactor">
    <cofactor evidence="1">
        <name>Zn(2+)</name>
        <dbReference type="ChEBI" id="CHEBI:29105"/>
    </cofactor>
    <text evidence="1">Binds 2 Zn(2+) ions per subunit.</text>
</comment>
<comment type="subcellular location">
    <subcellularLocation>
        <location evidence="6">Secreted</location>
        <location evidence="6">Extracellular space</location>
        <location evidence="6">Extracellular matrix</location>
    </subcellularLocation>
    <subcellularLocation>
        <location evidence="1">Secreted</location>
    </subcellularLocation>
</comment>
<comment type="domain">
    <text evidence="1">The C-terminal region binds to collagen.</text>
</comment>
<comment type="domain">
    <text evidence="1">The conserved cysteine present in the cysteine-switch motif binds the catalytic zinc ion, thus inhibiting the enzyme. The dissociation of the cysteine from the zinc ion upon the activation-peptide release activates the enzyme (By similarity).</text>
</comment>
<comment type="PTM">
    <text evidence="1">The proenzyme is activated by removal of the propeptide; this cleavage can be effected by other matrix metalloproteinases, such as MMP2, MMP3 and MMP14 and may involve several cleavage steps. Cleavage can also be autocatalytic, after partial maturation by another protease or after treatment with 4-aminophenylmercuric acetate (APMA) (in vitro) (By similarity).</text>
</comment>
<comment type="PTM">
    <text evidence="1">N-glycosylated.</text>
</comment>
<comment type="PTM">
    <text evidence="2">Tyrosine phosphorylated by PKDCC/VLK.</text>
</comment>
<comment type="similarity">
    <text evidence="6">Belongs to the peptidase M10A family.</text>
</comment>
<sequence length="466" mass="53375">ATFFLLSWTHCWSLPLPYGDDDDDDLSEEDLEFAEHYLKSYYHPVTLAGILKKSTVTSTVDRLREMQSFFGLDVTGKLDDPTLDIMRKPRCGVPDVGVYNVFPRTLKWSQTNLTYRIVNYTPDISHSEVEKAFRKAFKVWSDVTPLNFTRIHDGTADIMISFGTKEHGDFYPFDGPSGLLAHAFPPGPNLGGDAHFDDDETWTSSSKGYNLFIVAAHELGHSLGLDHSKDPGALMFPIYTYTGKSHFMLPDDDVQGIQSLYGPGDEDPNPKHPKTPEKCDPALSLDAITSLRGETMIFKDRFFWRLHPQQVEPELFLTKSFWPELPNHVDAAYEHPSRDLMFIFRGRKFWALNGYDIMEGYPRKISDLGFPKEVKRLSAAVHFEDTGKTLFFSGNHVWSYDDANQTMDKDYPRLIEEEFPGIGDKVDAVYEKNGYIYFFNGPIQFEYSIWSNRIVRVMPTNSLLWC</sequence>
<gene>
    <name type="primary">Mmp13</name>
</gene>
<proteinExistence type="evidence at protein level"/>
<protein>
    <recommendedName>
        <fullName>Collagenase 3</fullName>
        <ecNumber>3.4.24.-</ecNumber>
    </recommendedName>
    <alternativeName>
        <fullName>Matrix metalloproteinase-13</fullName>
        <shortName>MMP-13</shortName>
    </alternativeName>
    <alternativeName>
        <fullName>UMRCASE</fullName>
    </alternativeName>
</protein>
<dbReference type="EC" id="3.4.24.-"/>
<dbReference type="EMBL" id="M60616">
    <property type="protein sequence ID" value="AAA72124.1"/>
    <property type="molecule type" value="mRNA"/>
</dbReference>
<dbReference type="PIR" id="A23685">
    <property type="entry name" value="A23685"/>
</dbReference>
<dbReference type="SMR" id="P23097"/>
<dbReference type="FunCoup" id="P23097">
    <property type="interactions" value="35"/>
</dbReference>
<dbReference type="STRING" id="10116.ENSRNOP00000011507"/>
<dbReference type="BindingDB" id="P23097"/>
<dbReference type="ChEMBL" id="CHEMBL4944"/>
<dbReference type="MEROPS" id="M10.013"/>
<dbReference type="GlyCosmos" id="P23097">
    <property type="glycosylation" value="3 sites, No reported glycans"/>
</dbReference>
<dbReference type="GlyGen" id="P23097">
    <property type="glycosylation" value="3 sites"/>
</dbReference>
<dbReference type="PhosphoSitePlus" id="P23097"/>
<dbReference type="PaxDb" id="10116-ENSRNOP00000011507"/>
<dbReference type="ABCD" id="P23097">
    <property type="antibodies" value="1 sequenced antibody"/>
</dbReference>
<dbReference type="UCSC" id="RGD:620196">
    <property type="organism name" value="rat"/>
</dbReference>
<dbReference type="AGR" id="RGD:620196"/>
<dbReference type="RGD" id="620196">
    <property type="gene designation" value="Mmp13"/>
</dbReference>
<dbReference type="eggNOG" id="KOG1565">
    <property type="taxonomic scope" value="Eukaryota"/>
</dbReference>
<dbReference type="InParanoid" id="P23097"/>
<dbReference type="PhylomeDB" id="P23097"/>
<dbReference type="BRENDA" id="3.4.24.B4">
    <property type="organism ID" value="5301"/>
</dbReference>
<dbReference type="Reactome" id="R-RNO-1442490">
    <property type="pathway name" value="Collagen degradation"/>
</dbReference>
<dbReference type="Reactome" id="R-RNO-1474228">
    <property type="pathway name" value="Degradation of the extracellular matrix"/>
</dbReference>
<dbReference type="Reactome" id="R-RNO-1592389">
    <property type="pathway name" value="Activation of Matrix Metalloproteinases"/>
</dbReference>
<dbReference type="Reactome" id="R-RNO-2022090">
    <property type="pathway name" value="Assembly of collagen fibrils and other multimeric structures"/>
</dbReference>
<dbReference type="PRO" id="PR:P23097"/>
<dbReference type="Proteomes" id="UP000002494">
    <property type="component" value="Unplaced"/>
</dbReference>
<dbReference type="GO" id="GO:0031012">
    <property type="term" value="C:extracellular matrix"/>
    <property type="evidence" value="ECO:0007669"/>
    <property type="project" value="InterPro"/>
</dbReference>
<dbReference type="GO" id="GO:0005576">
    <property type="term" value="C:extracellular region"/>
    <property type="evidence" value="ECO:0000304"/>
    <property type="project" value="Reactome"/>
</dbReference>
<dbReference type="GO" id="GO:0005615">
    <property type="term" value="C:extracellular space"/>
    <property type="evidence" value="ECO:0000314"/>
    <property type="project" value="RGD"/>
</dbReference>
<dbReference type="GO" id="GO:0046581">
    <property type="term" value="C:intercellular canaliculus"/>
    <property type="evidence" value="ECO:0000314"/>
    <property type="project" value="RGD"/>
</dbReference>
<dbReference type="GO" id="GO:0005509">
    <property type="term" value="F:calcium ion binding"/>
    <property type="evidence" value="ECO:0000314"/>
    <property type="project" value="RGD"/>
</dbReference>
<dbReference type="GO" id="GO:0048306">
    <property type="term" value="F:calcium-dependent protein binding"/>
    <property type="evidence" value="ECO:0000314"/>
    <property type="project" value="RGD"/>
</dbReference>
<dbReference type="GO" id="GO:0005518">
    <property type="term" value="F:collagen binding"/>
    <property type="evidence" value="ECO:0000250"/>
    <property type="project" value="UniProtKB"/>
</dbReference>
<dbReference type="GO" id="GO:0004175">
    <property type="term" value="F:endopeptidase activity"/>
    <property type="evidence" value="ECO:0000266"/>
    <property type="project" value="RGD"/>
</dbReference>
<dbReference type="GO" id="GO:0001968">
    <property type="term" value="F:fibronectin binding"/>
    <property type="evidence" value="ECO:0000353"/>
    <property type="project" value="RGD"/>
</dbReference>
<dbReference type="GO" id="GO:0050750">
    <property type="term" value="F:low-density lipoprotein particle receptor binding"/>
    <property type="evidence" value="ECO:0000353"/>
    <property type="project" value="RGD"/>
</dbReference>
<dbReference type="GO" id="GO:0004222">
    <property type="term" value="F:metalloendopeptidase activity"/>
    <property type="evidence" value="ECO:0000314"/>
    <property type="project" value="RGD"/>
</dbReference>
<dbReference type="GO" id="GO:0008233">
    <property type="term" value="F:peptidase activity"/>
    <property type="evidence" value="ECO:0000266"/>
    <property type="project" value="RGD"/>
</dbReference>
<dbReference type="GO" id="GO:0004252">
    <property type="term" value="F:serine-type endopeptidase activity"/>
    <property type="evidence" value="ECO:0000304"/>
    <property type="project" value="Reactome"/>
</dbReference>
<dbReference type="GO" id="GO:0008270">
    <property type="term" value="F:zinc ion binding"/>
    <property type="evidence" value="ECO:0000314"/>
    <property type="project" value="RGD"/>
</dbReference>
<dbReference type="GO" id="GO:0030282">
    <property type="term" value="P:bone mineralization"/>
    <property type="evidence" value="ECO:0000266"/>
    <property type="project" value="RGD"/>
</dbReference>
<dbReference type="GO" id="GO:0060349">
    <property type="term" value="P:bone morphogenesis"/>
    <property type="evidence" value="ECO:0000250"/>
    <property type="project" value="UniProtKB"/>
</dbReference>
<dbReference type="GO" id="GO:0071498">
    <property type="term" value="P:cellular response to fluid shear stress"/>
    <property type="evidence" value="ECO:0000270"/>
    <property type="project" value="RGD"/>
</dbReference>
<dbReference type="GO" id="GO:0030574">
    <property type="term" value="P:collagen catabolic process"/>
    <property type="evidence" value="ECO:0000250"/>
    <property type="project" value="UniProtKB"/>
</dbReference>
<dbReference type="GO" id="GO:0035116">
    <property type="term" value="P:embryonic hindlimb morphogenesis"/>
    <property type="evidence" value="ECO:0000270"/>
    <property type="project" value="RGD"/>
</dbReference>
<dbReference type="GO" id="GO:0001958">
    <property type="term" value="P:endochondral ossification"/>
    <property type="evidence" value="ECO:0000270"/>
    <property type="project" value="RGD"/>
</dbReference>
<dbReference type="GO" id="GO:0044849">
    <property type="term" value="P:estrous cycle"/>
    <property type="evidence" value="ECO:0000270"/>
    <property type="project" value="RGD"/>
</dbReference>
<dbReference type="GO" id="GO:0022617">
    <property type="term" value="P:extracellular matrix disassembly"/>
    <property type="evidence" value="ECO:0000250"/>
    <property type="project" value="UniProtKB"/>
</dbReference>
<dbReference type="GO" id="GO:0030198">
    <property type="term" value="P:extracellular matrix organization"/>
    <property type="evidence" value="ECO:0000318"/>
    <property type="project" value="GO_Central"/>
</dbReference>
<dbReference type="GO" id="GO:0003417">
    <property type="term" value="P:growth plate cartilage development"/>
    <property type="evidence" value="ECO:0000266"/>
    <property type="project" value="RGD"/>
</dbReference>
<dbReference type="GO" id="GO:0007507">
    <property type="term" value="P:heart development"/>
    <property type="evidence" value="ECO:0000314"/>
    <property type="project" value="RGD"/>
</dbReference>
<dbReference type="GO" id="GO:0001554">
    <property type="term" value="P:luteolysis"/>
    <property type="evidence" value="ECO:0000270"/>
    <property type="project" value="RGD"/>
</dbReference>
<dbReference type="GO" id="GO:0001503">
    <property type="term" value="P:ossification"/>
    <property type="evidence" value="ECO:0000270"/>
    <property type="project" value="RGD"/>
</dbReference>
<dbReference type="GO" id="GO:0001649">
    <property type="term" value="P:osteoblast differentiation"/>
    <property type="evidence" value="ECO:0000270"/>
    <property type="project" value="RGD"/>
</dbReference>
<dbReference type="GO" id="GO:0007567">
    <property type="term" value="P:parturition"/>
    <property type="evidence" value="ECO:0000270"/>
    <property type="project" value="RGD"/>
</dbReference>
<dbReference type="GO" id="GO:1904244">
    <property type="term" value="P:positive regulation of pancreatic trypsinogen secretion"/>
    <property type="evidence" value="ECO:0000314"/>
    <property type="project" value="RGD"/>
</dbReference>
<dbReference type="GO" id="GO:0030163">
    <property type="term" value="P:protein catabolic process"/>
    <property type="evidence" value="ECO:0000314"/>
    <property type="project" value="RGD"/>
</dbReference>
<dbReference type="GO" id="GO:0006508">
    <property type="term" value="P:proteolysis"/>
    <property type="evidence" value="ECO:0000266"/>
    <property type="project" value="RGD"/>
</dbReference>
<dbReference type="GO" id="GO:0043627">
    <property type="term" value="P:response to estrogen"/>
    <property type="evidence" value="ECO:0000270"/>
    <property type="project" value="RGD"/>
</dbReference>
<dbReference type="GO" id="GO:0009725">
    <property type="term" value="P:response to hormone"/>
    <property type="evidence" value="ECO:0000314"/>
    <property type="project" value="RGD"/>
</dbReference>
<dbReference type="GO" id="GO:0001666">
    <property type="term" value="P:response to hypoxia"/>
    <property type="evidence" value="ECO:0000270"/>
    <property type="project" value="RGD"/>
</dbReference>
<dbReference type="GO" id="GO:0009612">
    <property type="term" value="P:response to mechanical stimulus"/>
    <property type="evidence" value="ECO:0000270"/>
    <property type="project" value="RGD"/>
</dbReference>
<dbReference type="GO" id="GO:0009410">
    <property type="term" value="P:response to xenobiotic stimulus"/>
    <property type="evidence" value="ECO:0000270"/>
    <property type="project" value="RGD"/>
</dbReference>
<dbReference type="CDD" id="cd00094">
    <property type="entry name" value="HX"/>
    <property type="match status" value="1"/>
</dbReference>
<dbReference type="CDD" id="cd04278">
    <property type="entry name" value="ZnMc_MMP"/>
    <property type="match status" value="1"/>
</dbReference>
<dbReference type="FunFam" id="3.40.390.10:FF:000007">
    <property type="entry name" value="Collagenase 3"/>
    <property type="match status" value="1"/>
</dbReference>
<dbReference type="FunFam" id="2.110.10.10:FF:000002">
    <property type="entry name" value="Matrix metallopeptidase 3"/>
    <property type="match status" value="1"/>
</dbReference>
<dbReference type="Gene3D" id="3.40.390.10">
    <property type="entry name" value="Collagenase (Catalytic Domain)"/>
    <property type="match status" value="1"/>
</dbReference>
<dbReference type="Gene3D" id="2.110.10.10">
    <property type="entry name" value="Hemopexin-like domain"/>
    <property type="match status" value="1"/>
</dbReference>
<dbReference type="InterPro" id="IPR000585">
    <property type="entry name" value="Hemopexin-like_dom"/>
</dbReference>
<dbReference type="InterPro" id="IPR036375">
    <property type="entry name" value="Hemopexin-like_dom_sf"/>
</dbReference>
<dbReference type="InterPro" id="IPR018487">
    <property type="entry name" value="Hemopexin-like_repeat"/>
</dbReference>
<dbReference type="InterPro" id="IPR018486">
    <property type="entry name" value="Hemopexin_CS"/>
</dbReference>
<dbReference type="InterPro" id="IPR033739">
    <property type="entry name" value="M10A_MMP"/>
</dbReference>
<dbReference type="InterPro" id="IPR024079">
    <property type="entry name" value="MetalloPept_cat_dom_sf"/>
</dbReference>
<dbReference type="InterPro" id="IPR001818">
    <property type="entry name" value="Pept_M10_metallopeptidase"/>
</dbReference>
<dbReference type="InterPro" id="IPR021190">
    <property type="entry name" value="Pept_M10A"/>
</dbReference>
<dbReference type="InterPro" id="IPR021158">
    <property type="entry name" value="Pept_M10A_Zn_BS"/>
</dbReference>
<dbReference type="InterPro" id="IPR006026">
    <property type="entry name" value="Peptidase_Metallo"/>
</dbReference>
<dbReference type="InterPro" id="IPR002477">
    <property type="entry name" value="Peptidoglycan-bd-like"/>
</dbReference>
<dbReference type="InterPro" id="IPR036365">
    <property type="entry name" value="PGBD-like_sf"/>
</dbReference>
<dbReference type="PANTHER" id="PTHR10201:SF165">
    <property type="entry name" value="COLLAGENASE 3"/>
    <property type="match status" value="1"/>
</dbReference>
<dbReference type="PANTHER" id="PTHR10201">
    <property type="entry name" value="MATRIX METALLOPROTEINASE"/>
    <property type="match status" value="1"/>
</dbReference>
<dbReference type="Pfam" id="PF00045">
    <property type="entry name" value="Hemopexin"/>
    <property type="match status" value="4"/>
</dbReference>
<dbReference type="Pfam" id="PF00413">
    <property type="entry name" value="Peptidase_M10"/>
    <property type="match status" value="1"/>
</dbReference>
<dbReference type="Pfam" id="PF01471">
    <property type="entry name" value="PG_binding_1"/>
    <property type="match status" value="1"/>
</dbReference>
<dbReference type="PIRSF" id="PIRSF001191">
    <property type="entry name" value="Peptidase_M10A_matrix"/>
    <property type="match status" value="1"/>
</dbReference>
<dbReference type="PRINTS" id="PR00138">
    <property type="entry name" value="MATRIXIN"/>
</dbReference>
<dbReference type="SMART" id="SM00120">
    <property type="entry name" value="HX"/>
    <property type="match status" value="4"/>
</dbReference>
<dbReference type="SMART" id="SM00235">
    <property type="entry name" value="ZnMc"/>
    <property type="match status" value="1"/>
</dbReference>
<dbReference type="SUPFAM" id="SSF50923">
    <property type="entry name" value="Hemopexin-like domain"/>
    <property type="match status" value="1"/>
</dbReference>
<dbReference type="SUPFAM" id="SSF55486">
    <property type="entry name" value="Metalloproteases ('zincins'), catalytic domain"/>
    <property type="match status" value="1"/>
</dbReference>
<dbReference type="SUPFAM" id="SSF47090">
    <property type="entry name" value="PGBD-like"/>
    <property type="match status" value="1"/>
</dbReference>
<dbReference type="PROSITE" id="PS00546">
    <property type="entry name" value="CYSTEINE_SWITCH"/>
    <property type="match status" value="1"/>
</dbReference>
<dbReference type="PROSITE" id="PS00024">
    <property type="entry name" value="HEMOPEXIN"/>
    <property type="match status" value="1"/>
</dbReference>
<dbReference type="PROSITE" id="PS51642">
    <property type="entry name" value="HEMOPEXIN_2"/>
    <property type="match status" value="4"/>
</dbReference>
<dbReference type="PROSITE" id="PS00142">
    <property type="entry name" value="ZINC_PROTEASE"/>
    <property type="match status" value="1"/>
</dbReference>
<name>MMP13_RAT</name>
<feature type="signal peptide" evidence="3">
    <location>
        <begin position="1" status="less than"/>
        <end position="13"/>
    </location>
</feature>
<feature type="propeptide" id="PRO_0000028794" description="Activation peptide">
    <location>
        <begin position="14"/>
        <end position="98"/>
    </location>
</feature>
<feature type="chain" id="PRO_0000028795" description="Collagenase 3">
    <location>
        <begin position="99"/>
        <end position="466"/>
    </location>
</feature>
<feature type="repeat" description="Hemopexin 1">
    <location>
        <begin position="276"/>
        <end position="325"/>
    </location>
</feature>
<feature type="repeat" description="Hemopexin 2">
    <location>
        <begin position="326"/>
        <end position="372"/>
    </location>
</feature>
<feature type="repeat" description="Hemopexin 3">
    <location>
        <begin position="374"/>
        <end position="422"/>
    </location>
</feature>
<feature type="repeat" description="Hemopexin 4">
    <location>
        <begin position="423"/>
        <end position="466"/>
    </location>
</feature>
<feature type="region of interest" description="Interaction with TIMP2" evidence="1">
    <location>
        <begin position="171"/>
        <end position="241"/>
    </location>
</feature>
<feature type="region of interest" description="Disordered" evidence="5">
    <location>
        <begin position="258"/>
        <end position="279"/>
    </location>
</feature>
<feature type="region of interest" description="Interaction with collagen" evidence="1">
    <location>
        <begin position="263"/>
        <end position="466"/>
    </location>
</feature>
<feature type="short sequence motif" description="Cysteine switch" evidence="1">
    <location>
        <begin position="89"/>
        <end position="96"/>
    </location>
</feature>
<feature type="compositionally biased region" description="Basic and acidic residues" evidence="5">
    <location>
        <begin position="268"/>
        <end position="279"/>
    </location>
</feature>
<feature type="active site" evidence="4">
    <location>
        <position position="218"/>
    </location>
</feature>
<feature type="binding site" description="in inhibited form" evidence="1">
    <location>
        <position position="91"/>
    </location>
    <ligand>
        <name>Zn(2+)</name>
        <dbReference type="ChEBI" id="CHEBI:29105"/>
        <label>2</label>
        <note>catalytic</note>
    </ligand>
</feature>
<feature type="binding site" evidence="1">
    <location>
        <position position="123"/>
    </location>
    <ligand>
        <name>Ca(2+)</name>
        <dbReference type="ChEBI" id="CHEBI:29108"/>
        <label>1</label>
    </ligand>
</feature>
<feature type="binding site" evidence="1">
    <location>
        <position position="157"/>
    </location>
    <ligand>
        <name>Ca(2+)</name>
        <dbReference type="ChEBI" id="CHEBI:29108"/>
        <label>2</label>
    </ligand>
</feature>
<feature type="binding site" evidence="1">
    <location>
        <position position="167"/>
    </location>
    <ligand>
        <name>Zn(2+)</name>
        <dbReference type="ChEBI" id="CHEBI:29105"/>
        <label>1</label>
    </ligand>
</feature>
<feature type="binding site" evidence="1">
    <location>
        <position position="169"/>
    </location>
    <ligand>
        <name>Zn(2+)</name>
        <dbReference type="ChEBI" id="CHEBI:29105"/>
        <label>1</label>
    </ligand>
</feature>
<feature type="binding site" evidence="1">
    <location>
        <position position="174"/>
    </location>
    <ligand>
        <name>Ca(2+)</name>
        <dbReference type="ChEBI" id="CHEBI:29108"/>
        <label>3</label>
    </ligand>
</feature>
<feature type="binding site" evidence="1">
    <location>
        <position position="175"/>
    </location>
    <ligand>
        <name>Ca(2+)</name>
        <dbReference type="ChEBI" id="CHEBI:29108"/>
        <label>3</label>
    </ligand>
</feature>
<feature type="binding site" evidence="1">
    <location>
        <position position="177"/>
    </location>
    <ligand>
        <name>Ca(2+)</name>
        <dbReference type="ChEBI" id="CHEBI:29108"/>
        <label>3</label>
    </ligand>
</feature>
<feature type="binding site" evidence="1">
    <location>
        <position position="179"/>
    </location>
    <ligand>
        <name>Ca(2+)</name>
        <dbReference type="ChEBI" id="CHEBI:29108"/>
        <label>3</label>
    </ligand>
</feature>
<feature type="binding site" evidence="1">
    <location>
        <position position="182"/>
    </location>
    <ligand>
        <name>Zn(2+)</name>
        <dbReference type="ChEBI" id="CHEBI:29105"/>
        <label>1</label>
    </ligand>
</feature>
<feature type="binding site" evidence="1">
    <location>
        <position position="189"/>
    </location>
    <ligand>
        <name>Ca(2+)</name>
        <dbReference type="ChEBI" id="CHEBI:29108"/>
        <label>2</label>
    </ligand>
</feature>
<feature type="binding site" evidence="1">
    <location>
        <position position="191"/>
    </location>
    <ligand>
        <name>Ca(2+)</name>
        <dbReference type="ChEBI" id="CHEBI:29108"/>
        <label>2</label>
    </ligand>
</feature>
<feature type="binding site" evidence="1">
    <location>
        <position position="193"/>
    </location>
    <ligand>
        <name>Ca(2+)</name>
        <dbReference type="ChEBI" id="CHEBI:29108"/>
        <label>2</label>
    </ligand>
</feature>
<feature type="binding site" evidence="1">
    <location>
        <position position="195"/>
    </location>
    <ligand>
        <name>Zn(2+)</name>
        <dbReference type="ChEBI" id="CHEBI:29105"/>
        <label>1</label>
    </ligand>
</feature>
<feature type="binding site" evidence="1">
    <location>
        <position position="197"/>
    </location>
    <ligand>
        <name>Ca(2+)</name>
        <dbReference type="ChEBI" id="CHEBI:29108"/>
        <label>3</label>
    </ligand>
</feature>
<feature type="binding site" evidence="1">
    <location>
        <position position="198"/>
    </location>
    <ligand>
        <name>Ca(2+)</name>
        <dbReference type="ChEBI" id="CHEBI:29108"/>
        <label>1</label>
    </ligand>
</feature>
<feature type="binding site" evidence="1">
    <location>
        <position position="200"/>
    </location>
    <ligand>
        <name>Ca(2+)</name>
        <dbReference type="ChEBI" id="CHEBI:29108"/>
        <label>1</label>
    </ligand>
</feature>
<feature type="binding site" evidence="1">
    <location>
        <position position="200"/>
    </location>
    <ligand>
        <name>Ca(2+)</name>
        <dbReference type="ChEBI" id="CHEBI:29108"/>
        <label>3</label>
    </ligand>
</feature>
<feature type="binding site" evidence="1">
    <location>
        <position position="217"/>
    </location>
    <ligand>
        <name>Zn(2+)</name>
        <dbReference type="ChEBI" id="CHEBI:29105"/>
        <label>2</label>
        <note>catalytic</note>
    </ligand>
</feature>
<feature type="binding site" evidence="1">
    <location>
        <position position="221"/>
    </location>
    <ligand>
        <name>Zn(2+)</name>
        <dbReference type="ChEBI" id="CHEBI:29105"/>
        <label>2</label>
        <note>catalytic</note>
    </ligand>
</feature>
<feature type="binding site" evidence="1">
    <location>
        <position position="227"/>
    </location>
    <ligand>
        <name>Zn(2+)</name>
        <dbReference type="ChEBI" id="CHEBI:29105"/>
        <label>2</label>
        <note>catalytic</note>
    </ligand>
</feature>
<feature type="binding site" evidence="1">
    <location>
        <position position="235"/>
    </location>
    <ligand>
        <name>Zn(2+)</name>
        <dbReference type="ChEBI" id="CHEBI:29105"/>
        <label>2</label>
        <note>catalytic</note>
    </ligand>
</feature>
<feature type="binding site" evidence="1">
    <location>
        <position position="286"/>
    </location>
    <ligand>
        <name>Ca(2+)</name>
        <dbReference type="ChEBI" id="CHEBI:29108"/>
        <label>4</label>
    </ligand>
</feature>
<feature type="binding site" evidence="1">
    <location>
        <position position="288"/>
    </location>
    <ligand>
        <name>Ca(2+)</name>
        <dbReference type="ChEBI" id="CHEBI:29108"/>
        <label>5</label>
    </ligand>
</feature>
<feature type="binding site" evidence="1">
    <location>
        <position position="330"/>
    </location>
    <ligand>
        <name>Ca(2+)</name>
        <dbReference type="ChEBI" id="CHEBI:29108"/>
        <label>4</label>
    </ligand>
</feature>
<feature type="binding site" evidence="1">
    <location>
        <position position="332"/>
    </location>
    <ligand>
        <name>Ca(2+)</name>
        <dbReference type="ChEBI" id="CHEBI:29108"/>
        <label>5</label>
    </ligand>
</feature>
<feature type="binding site" evidence="1">
    <location>
        <position position="378"/>
    </location>
    <ligand>
        <name>Ca(2+)</name>
        <dbReference type="ChEBI" id="CHEBI:29108"/>
        <label>4</label>
    </ligand>
</feature>
<feature type="binding site" evidence="1">
    <location>
        <position position="380"/>
    </location>
    <ligand>
        <name>Ca(2+)</name>
        <dbReference type="ChEBI" id="CHEBI:29108"/>
        <label>5</label>
    </ligand>
</feature>
<feature type="binding site" evidence="1">
    <location>
        <position position="427"/>
    </location>
    <ligand>
        <name>Ca(2+)</name>
        <dbReference type="ChEBI" id="CHEBI:29108"/>
        <label>4</label>
    </ligand>
</feature>
<feature type="binding site" evidence="1">
    <location>
        <position position="429"/>
    </location>
    <ligand>
        <name>Ca(2+)</name>
        <dbReference type="ChEBI" id="CHEBI:29108"/>
        <label>5</label>
    </ligand>
</feature>
<feature type="modified residue" description="Phosphotyrosine; by PKDCC" evidence="2">
    <location>
        <position position="361"/>
    </location>
</feature>
<feature type="glycosylation site" description="N-linked (GlcNAc...) asparagine" evidence="3">
    <location>
        <position position="112"/>
    </location>
</feature>
<feature type="glycosylation site" description="N-linked (GlcNAc...) asparagine" evidence="3">
    <location>
        <position position="147"/>
    </location>
</feature>
<feature type="glycosylation site" description="N-linked (GlcNAc...) asparagine" evidence="3">
    <location>
        <position position="404"/>
    </location>
</feature>
<feature type="disulfide bond" evidence="1">
    <location>
        <begin position="279"/>
        <end position="466"/>
    </location>
</feature>
<feature type="non-terminal residue">
    <location>
        <position position="1"/>
    </location>
</feature>
<organism>
    <name type="scientific">Rattus norvegicus</name>
    <name type="common">Rat</name>
    <dbReference type="NCBI Taxonomy" id="10116"/>
    <lineage>
        <taxon>Eukaryota</taxon>
        <taxon>Metazoa</taxon>
        <taxon>Chordata</taxon>
        <taxon>Craniata</taxon>
        <taxon>Vertebrata</taxon>
        <taxon>Euteleostomi</taxon>
        <taxon>Mammalia</taxon>
        <taxon>Eutheria</taxon>
        <taxon>Euarchontoglires</taxon>
        <taxon>Glires</taxon>
        <taxon>Rodentia</taxon>
        <taxon>Myomorpha</taxon>
        <taxon>Muroidea</taxon>
        <taxon>Muridae</taxon>
        <taxon>Murinae</taxon>
        <taxon>Rattus</taxon>
    </lineage>
</organism>
<keyword id="KW-0106">Calcium</keyword>
<keyword id="KW-0177">Collagen degradation</keyword>
<keyword id="KW-0903">Direct protein sequencing</keyword>
<keyword id="KW-1015">Disulfide bond</keyword>
<keyword id="KW-0272">Extracellular matrix</keyword>
<keyword id="KW-0325">Glycoprotein</keyword>
<keyword id="KW-0378">Hydrolase</keyword>
<keyword id="KW-0479">Metal-binding</keyword>
<keyword id="KW-0482">Metalloprotease</keyword>
<keyword id="KW-0597">Phosphoprotein</keyword>
<keyword id="KW-0645">Protease</keyword>
<keyword id="KW-1185">Reference proteome</keyword>
<keyword id="KW-0677">Repeat</keyword>
<keyword id="KW-0964">Secreted</keyword>
<keyword id="KW-0732">Signal</keyword>
<keyword id="KW-0862">Zinc</keyword>
<keyword id="KW-0865">Zymogen</keyword>
<reference key="1">
    <citation type="journal article" date="1990" name="J. Biol. Chem.">
        <title>Rat collagenase. Cloning, amino acid sequence comparison, and parathyroid hormone regulation in osteoblastic cells.</title>
        <authorList>
            <person name="Quinn C.O."/>
            <person name="Scott D.K."/>
            <person name="Brinckerhoff C.E."/>
            <person name="Matrisian L.M."/>
            <person name="Jeffrey J.J."/>
            <person name="Partridge N.C."/>
        </authorList>
    </citation>
    <scope>NUCLEOTIDE SEQUENCE [MRNA]</scope>
    <scope>PARTIAL PROTEIN SEQUENCE</scope>
</reference>
<accession>P23097</accession>